<feature type="chain" id="PRO_0000437633" description="6-methylsalicylic acid synthase">
    <location>
        <begin position="1"/>
        <end position="1803"/>
    </location>
</feature>
<feature type="domain" description="Ketosynthase family 3 (KS3)" evidence="3">
    <location>
        <begin position="44"/>
        <end position="470"/>
    </location>
</feature>
<feature type="domain" description="Malonyl-CoA:ACP transacylase (MAT)" evidence="1">
    <location>
        <begin position="581"/>
        <end position="894"/>
    </location>
</feature>
<feature type="domain" description="PKS/mFAS DH" evidence="4">
    <location>
        <begin position="940"/>
        <end position="1218"/>
    </location>
</feature>
<feature type="domain" description="Ketoreductase (KR)" evidence="1">
    <location>
        <begin position="1434"/>
        <end position="1628"/>
    </location>
</feature>
<feature type="domain" description="Carrier" evidence="2">
    <location>
        <begin position="1726"/>
        <end position="1801"/>
    </location>
</feature>
<feature type="region of interest" description="Disordered" evidence="6">
    <location>
        <begin position="1"/>
        <end position="40"/>
    </location>
</feature>
<feature type="region of interest" description="N-terminal hotdog fold" evidence="4">
    <location>
        <begin position="940"/>
        <end position="1058"/>
    </location>
</feature>
<feature type="region of interest" description="C-terminal hotdog fold" evidence="4">
    <location>
        <begin position="1073"/>
        <end position="1218"/>
    </location>
</feature>
<feature type="region of interest" description="Required for homotetramer formation" evidence="8">
    <location>
        <begin position="1141"/>
        <end position="1262"/>
    </location>
</feature>
<feature type="region of interest" description="Disordered" evidence="6">
    <location>
        <begin position="1701"/>
        <end position="1721"/>
    </location>
</feature>
<feature type="region of interest" description="Required for catalytic activity" evidence="8">
    <location>
        <begin position="1783"/>
        <end position="1803"/>
    </location>
</feature>
<feature type="compositionally biased region" description="Low complexity" evidence="6">
    <location>
        <begin position="13"/>
        <end position="24"/>
    </location>
</feature>
<feature type="compositionally biased region" description="Low complexity" evidence="6">
    <location>
        <begin position="1701"/>
        <end position="1710"/>
    </location>
</feature>
<feature type="active site" description="For beta-ketoacyl synthase activity" evidence="3">
    <location>
        <position position="216"/>
    </location>
</feature>
<feature type="active site" description="For beta-ketoacyl synthase activity" evidence="3">
    <location>
        <position position="351"/>
    </location>
</feature>
<feature type="active site" description="For beta-ketoacyl synthase activity" evidence="3">
    <location>
        <position position="391"/>
    </location>
</feature>
<feature type="active site" description="For malonyltransferase activity" evidence="5">
    <location>
        <position position="667"/>
    </location>
</feature>
<feature type="active site" description="Proton acceptor; for thioesterase activity" evidence="4 20">
    <location>
        <position position="972"/>
    </location>
</feature>
<feature type="active site" description="Proton donor; for thioesterase activity" evidence="4 20">
    <location>
        <position position="1129"/>
    </location>
</feature>
<feature type="modified residue" description="O-(pantetheine 4'-phosphoryl)serine" evidence="2">
    <location>
        <position position="1761"/>
    </location>
</feature>
<feature type="mutagenesis site" description="Abolishes 6-MSA production." evidence="9">
    <original>C</original>
    <variation>A</variation>
    <location>
        <position position="216"/>
    </location>
</feature>
<feature type="mutagenesis site" description="Abolishes 6-MSA production." evidence="9">
    <original>S</original>
    <variation>A</variation>
    <location>
        <position position="667"/>
    </location>
</feature>
<feature type="mutagenesis site" description="Does not affect 6-MSA production." evidence="9">
    <original>K</original>
    <variation>A</variation>
    <location>
        <position position="939"/>
    </location>
</feature>
<feature type="mutagenesis site" description="Abolishes 6-MSA production. Does not produce lactone; when associated with 1441-A--A-1446." evidence="9 10">
    <original>H</original>
    <variation>A</variation>
    <location>
        <position position="972"/>
    </location>
</feature>
<feature type="mutagenesis site" description="Produces triacetic acid lactone instead of 6-MSA. Does not produce lactone; when associated with A-972." evidence="9">
    <original>GLGALG</original>
    <variation>ALPALA</variation>
    <location>
        <begin position="1441"/>
        <end position="1446"/>
    </location>
</feature>
<feature type="mutagenesis site" description="Abolishes 6-MSA production." evidence="9">
    <original>S</original>
    <variation>A</variation>
    <location>
        <position position="1761"/>
    </location>
</feature>
<evidence type="ECO:0000255" key="1"/>
<evidence type="ECO:0000255" key="2">
    <source>
        <dbReference type="PROSITE-ProRule" id="PRU00258"/>
    </source>
</evidence>
<evidence type="ECO:0000255" key="3">
    <source>
        <dbReference type="PROSITE-ProRule" id="PRU01348"/>
    </source>
</evidence>
<evidence type="ECO:0000255" key="4">
    <source>
        <dbReference type="PROSITE-ProRule" id="PRU01363"/>
    </source>
</evidence>
<evidence type="ECO:0000255" key="5">
    <source>
        <dbReference type="PROSITE-ProRule" id="PRU10022"/>
    </source>
</evidence>
<evidence type="ECO:0000256" key="6">
    <source>
        <dbReference type="SAM" id="MobiDB-lite"/>
    </source>
</evidence>
<evidence type="ECO:0000269" key="7">
    <source>
    </source>
</evidence>
<evidence type="ECO:0000269" key="8">
    <source>
    </source>
</evidence>
<evidence type="ECO:0000269" key="9">
    <source>
    </source>
</evidence>
<evidence type="ECO:0000269" key="10">
    <source>
    </source>
</evidence>
<evidence type="ECO:0000269" key="11">
    <source>
    </source>
</evidence>
<evidence type="ECO:0000269" key="12">
    <source>
    </source>
</evidence>
<evidence type="ECO:0000269" key="13">
    <source>
    </source>
</evidence>
<evidence type="ECO:0000269" key="14">
    <source>
    </source>
</evidence>
<evidence type="ECO:0000269" key="15">
    <source>
    </source>
</evidence>
<evidence type="ECO:0000269" key="16">
    <source>
    </source>
</evidence>
<evidence type="ECO:0000303" key="17">
    <source>
    </source>
</evidence>
<evidence type="ECO:0000303" key="18">
    <source>
    </source>
</evidence>
<evidence type="ECO:0000305" key="19"/>
<evidence type="ECO:0000305" key="20">
    <source>
    </source>
</evidence>
<reference key="1">
    <citation type="submission" date="2005-09" db="EMBL/GenBank/DDBJ databases">
        <title>Annotation of the Aspergillus terreus NIH2624 genome.</title>
        <authorList>
            <person name="Birren B.W."/>
            <person name="Lander E.S."/>
            <person name="Galagan J.E."/>
            <person name="Nusbaum C."/>
            <person name="Devon K."/>
            <person name="Henn M."/>
            <person name="Ma L.-J."/>
            <person name="Jaffe D.B."/>
            <person name="Butler J."/>
            <person name="Alvarez P."/>
            <person name="Gnerre S."/>
            <person name="Grabherr M."/>
            <person name="Kleber M."/>
            <person name="Mauceli E.W."/>
            <person name="Brockman W."/>
            <person name="Rounsley S."/>
            <person name="Young S.K."/>
            <person name="LaButti K."/>
            <person name="Pushparaj V."/>
            <person name="DeCaprio D."/>
            <person name="Crawford M."/>
            <person name="Koehrsen M."/>
            <person name="Engels R."/>
            <person name="Montgomery P."/>
            <person name="Pearson M."/>
            <person name="Howarth C."/>
            <person name="Larson L."/>
            <person name="Luoma S."/>
            <person name="White J."/>
            <person name="Alvarado L."/>
            <person name="Kodira C.D."/>
            <person name="Zeng Q."/>
            <person name="Oleary S."/>
            <person name="Yandava C."/>
            <person name="Denning D.W."/>
            <person name="Nierman W.C."/>
            <person name="Milne T."/>
            <person name="Madden K."/>
        </authorList>
    </citation>
    <scope>NUCLEOTIDE SEQUENCE [LARGE SCALE GENOMIC DNA]</scope>
    <source>
        <strain>NIH 2624 / FGSC A1156</strain>
    </source>
</reference>
<reference key="2">
    <citation type="journal article" date="2010" name="J. Biol. Chem.">
        <title>Hidden function of catalytic domain in 6-methylsalicylic acid synthase for product release.</title>
        <authorList>
            <person name="Moriguchi T."/>
            <person name="Kezuka Y."/>
            <person name="Nonaka T."/>
            <person name="Ebizuka Y."/>
            <person name="Fujii I."/>
        </authorList>
    </citation>
    <scope>PROTEIN SEQUENCE OF 1676-1686 AND 1697-1707</scope>
    <scope>FUNCTION</scope>
    <scope>CATALYTIC ACTIVITY</scope>
    <scope>DOMAIN</scope>
    <scope>ACTIVE SITE</scope>
    <scope>MUTAGENESIS OF HIS-972</scope>
</reference>
<reference key="3">
    <citation type="journal article" date="1996" name="Mol. Gen. Genet.">
        <title>Cloning of the polyketide synthase gene atX from Aspergillus terreus and its identification as the 6-methylsalicylic acid synthase gene by heterologous expression.</title>
        <authorList>
            <person name="Fujii I."/>
            <person name="Ono Y."/>
            <person name="Tada H."/>
            <person name="Gomi K."/>
            <person name="Ebizuka Y."/>
            <person name="Sankawa U."/>
        </authorList>
    </citation>
    <scope>FUNCTION</scope>
    <scope>CATALYTIC ACTIVITY</scope>
</reference>
<reference key="4">
    <citation type="journal article" date="1997" name="Folia Microbiol. (Praha)">
        <title>Polyketide synthase gene pksM from Aspergillus terreus expressed during growth phase.</title>
        <authorList>
            <person name="Pazoutova S."/>
            <person name="Linka M."/>
            <person name="Storkova S."/>
            <person name="Schwab H."/>
        </authorList>
    </citation>
    <scope>FUNCTION</scope>
    <scope>INDUCTION</scope>
</reference>
<reference key="5">
    <citation type="journal article" date="1999" name="Proc. Natl. Acad. Sci. U.S.A.">
        <title>Terreic acid, a quinone epoxide inhibitor of Bruton's tyrosine kinase.</title>
        <authorList>
            <person name="Kawakami Y."/>
            <person name="Hartman S.E."/>
            <person name="Kinoshita E."/>
            <person name="Suzuki H."/>
            <person name="Kitaura J."/>
            <person name="Yao L."/>
            <person name="Inagaki N."/>
            <person name="Franco A."/>
            <person name="Hata D."/>
            <person name="Maeda-Yamamoto M."/>
            <person name="Fukamachi H."/>
            <person name="Nagai H."/>
            <person name="Kawakami T."/>
        </authorList>
    </citation>
    <scope>BIOTECHNOLOGY</scope>
</reference>
<reference key="6">
    <citation type="journal article" date="2006" name="ChemBioChem">
        <title>Analysis of subunit interactions in the iterative type I polyketide synthase ATX from Aspergillus terreus.</title>
        <authorList>
            <person name="Moriguchi T."/>
            <person name="Ebizuka Y."/>
            <person name="Fujii I."/>
        </authorList>
    </citation>
    <scope>FUNCTION</scope>
    <scope>CATALYTIC ACTIVITY</scope>
    <scope>SUBUNIT</scope>
</reference>
<reference key="7">
    <citation type="journal article" date="2008" name="ChemBioChem">
        <title>Domain-domain interactions in the iterative type I polyketide synthase ATX from Aspergillus terreus.</title>
        <authorList>
            <person name="Moriguchi T."/>
            <person name="Ebizuka Y."/>
            <person name="Fujii I."/>
        </authorList>
    </citation>
    <scope>FUNCTION</scope>
    <scope>CATALYTIC ACTIVITY</scope>
    <scope>MUTAGENESIS OF CYS-216; SER-667; LYS-939; HIS-972; GLY-1441; GLY-1443; GLY-1446 AND SER-1761</scope>
</reference>
<reference key="8">
    <citation type="journal article" date="2014" name="J. Basic Microbiol.">
        <title>Differential antibacterial properties of the MurA inhibitors terreic acid and fosfomycin.</title>
        <authorList>
            <person name="Olesen S.H."/>
            <person name="Ingles D.J."/>
            <person name="Yang Y."/>
            <person name="Schoenbrunn E."/>
        </authorList>
    </citation>
    <scope>BIOTECHNOLOGY</scope>
</reference>
<reference key="9">
    <citation type="journal article" date="2014" name="J. Biotechnol.">
        <title>Culture-based and sequence-based insights into biosynthesis of secondary metabolites by Aspergillus terreus ATCC 20542.</title>
        <authorList>
            <person name="Boruta T."/>
            <person name="Bizukojc M."/>
        </authorList>
    </citation>
    <scope>FUNCTION</scope>
</reference>
<reference key="10">
    <citation type="journal article" date="2014" name="Org. Lett.">
        <title>Molecular genetic characterization of terreic acid pathway in Aspergillus terreus.</title>
        <authorList>
            <person name="Guo C.J."/>
            <person name="Sun W.W."/>
            <person name="Bruno K.S."/>
            <person name="Wang C.C."/>
        </authorList>
    </citation>
    <scope>FUNCTION</scope>
    <scope>DISRUPTION PHENOTYPE</scope>
</reference>
<reference key="11">
    <citation type="journal article" date="2018" name="Sci. Rep.">
        <title>Heterologous pathway assembly reveals molecular steps of fungal terreic acid biosynthesis.</title>
        <authorList>
            <person name="Kong C."/>
            <person name="Huang H."/>
            <person name="Xue Y."/>
            <person name="Liu Y."/>
            <person name="Peng Q."/>
            <person name="Liu Q."/>
            <person name="Xu Q."/>
            <person name="Zhu Q."/>
            <person name="Yin Y."/>
            <person name="Zhou X."/>
            <person name="Zhang Y."/>
            <person name="Cai M."/>
        </authorList>
    </citation>
    <scope>FUNCTION</scope>
</reference>
<name>ATX_ASPTN</name>
<dbReference type="EC" id="2.3.1.165" evidence="8 9 10 15"/>
<dbReference type="EMBL" id="CH476602">
    <property type="protein sequence ID" value="EAU32819.1"/>
    <property type="molecule type" value="Genomic_DNA"/>
</dbReference>
<dbReference type="RefSeq" id="XP_001215453.1">
    <property type="nucleotide sequence ID" value="XM_001215453.1"/>
</dbReference>
<dbReference type="SMR" id="Q0CJ59"/>
<dbReference type="STRING" id="341663.Q0CJ59"/>
<dbReference type="EnsemblFungi" id="EAU32819">
    <property type="protein sequence ID" value="EAU32819"/>
    <property type="gene ID" value="ATEG_06275"/>
</dbReference>
<dbReference type="GeneID" id="4322099"/>
<dbReference type="VEuPathDB" id="FungiDB:ATEG_06275"/>
<dbReference type="eggNOG" id="KOG1202">
    <property type="taxonomic scope" value="Eukaryota"/>
</dbReference>
<dbReference type="HOGENOM" id="CLU_000022_35_3_1"/>
<dbReference type="OMA" id="SWVTHTT"/>
<dbReference type="OrthoDB" id="5334845at2759"/>
<dbReference type="Proteomes" id="UP000007963">
    <property type="component" value="Unassembled WGS sequence"/>
</dbReference>
<dbReference type="GO" id="GO:0004315">
    <property type="term" value="F:3-oxoacyl-[acyl-carrier-protein] synthase activity"/>
    <property type="evidence" value="ECO:0007669"/>
    <property type="project" value="InterPro"/>
</dbReference>
<dbReference type="GO" id="GO:0050641">
    <property type="term" value="F:6-methylsalicylic acid synthase activity"/>
    <property type="evidence" value="ECO:0007669"/>
    <property type="project" value="UniProtKB-EC"/>
</dbReference>
<dbReference type="GO" id="GO:0004312">
    <property type="term" value="F:fatty acid synthase activity"/>
    <property type="evidence" value="ECO:0007669"/>
    <property type="project" value="TreeGrafter"/>
</dbReference>
<dbReference type="GO" id="GO:0016491">
    <property type="term" value="F:oxidoreductase activity"/>
    <property type="evidence" value="ECO:0007669"/>
    <property type="project" value="UniProtKB-KW"/>
</dbReference>
<dbReference type="GO" id="GO:0031177">
    <property type="term" value="F:phosphopantetheine binding"/>
    <property type="evidence" value="ECO:0007669"/>
    <property type="project" value="InterPro"/>
</dbReference>
<dbReference type="GO" id="GO:0006633">
    <property type="term" value="P:fatty acid biosynthetic process"/>
    <property type="evidence" value="ECO:0007669"/>
    <property type="project" value="InterPro"/>
</dbReference>
<dbReference type="GO" id="GO:0044550">
    <property type="term" value="P:secondary metabolite biosynthetic process"/>
    <property type="evidence" value="ECO:0007669"/>
    <property type="project" value="TreeGrafter"/>
</dbReference>
<dbReference type="CDD" id="cd05274">
    <property type="entry name" value="KR_FAS_SDR_x"/>
    <property type="match status" value="1"/>
</dbReference>
<dbReference type="CDD" id="cd00833">
    <property type="entry name" value="PKS"/>
    <property type="match status" value="1"/>
</dbReference>
<dbReference type="Gene3D" id="3.30.70.3290">
    <property type="match status" value="1"/>
</dbReference>
<dbReference type="Gene3D" id="3.40.47.10">
    <property type="match status" value="1"/>
</dbReference>
<dbReference type="Gene3D" id="1.10.1200.10">
    <property type="entry name" value="ACP-like"/>
    <property type="match status" value="1"/>
</dbReference>
<dbReference type="Gene3D" id="3.40.366.10">
    <property type="entry name" value="Malonyl-Coenzyme A Acyl Carrier Protein, domain 2"/>
    <property type="match status" value="1"/>
</dbReference>
<dbReference type="Gene3D" id="3.40.50.720">
    <property type="entry name" value="NAD(P)-binding Rossmann-like Domain"/>
    <property type="match status" value="1"/>
</dbReference>
<dbReference type="Gene3D" id="3.10.129.110">
    <property type="entry name" value="Polyketide synthase dehydratase"/>
    <property type="match status" value="1"/>
</dbReference>
<dbReference type="InterPro" id="IPR001227">
    <property type="entry name" value="Ac_transferase_dom_sf"/>
</dbReference>
<dbReference type="InterPro" id="IPR036736">
    <property type="entry name" value="ACP-like_sf"/>
</dbReference>
<dbReference type="InterPro" id="IPR014043">
    <property type="entry name" value="Acyl_transferase_dom"/>
</dbReference>
<dbReference type="InterPro" id="IPR016035">
    <property type="entry name" value="Acyl_Trfase/lysoPLipase"/>
</dbReference>
<dbReference type="InterPro" id="IPR018201">
    <property type="entry name" value="Ketoacyl_synth_AS"/>
</dbReference>
<dbReference type="InterPro" id="IPR014031">
    <property type="entry name" value="Ketoacyl_synth_C"/>
</dbReference>
<dbReference type="InterPro" id="IPR014030">
    <property type="entry name" value="Ketoacyl_synth_N"/>
</dbReference>
<dbReference type="InterPro" id="IPR016036">
    <property type="entry name" value="Malonyl_transacylase_ACP-bd"/>
</dbReference>
<dbReference type="InterPro" id="IPR036291">
    <property type="entry name" value="NAD(P)-bd_dom_sf"/>
</dbReference>
<dbReference type="InterPro" id="IPR032821">
    <property type="entry name" value="PKS_assoc"/>
</dbReference>
<dbReference type="InterPro" id="IPR020841">
    <property type="entry name" value="PKS_Beta-ketoAc_synthase_dom"/>
</dbReference>
<dbReference type="InterPro" id="IPR042104">
    <property type="entry name" value="PKS_dehydratase_sf"/>
</dbReference>
<dbReference type="InterPro" id="IPR020807">
    <property type="entry name" value="PKS_DH"/>
</dbReference>
<dbReference type="InterPro" id="IPR049552">
    <property type="entry name" value="PKS_DH_N"/>
</dbReference>
<dbReference type="InterPro" id="IPR013968">
    <property type="entry name" value="PKS_KR"/>
</dbReference>
<dbReference type="InterPro" id="IPR049900">
    <property type="entry name" value="PKS_mFAS_DH"/>
</dbReference>
<dbReference type="InterPro" id="IPR050091">
    <property type="entry name" value="PKS_NRPS_Biosynth_Enz"/>
</dbReference>
<dbReference type="InterPro" id="IPR020806">
    <property type="entry name" value="PKS_PP-bd"/>
</dbReference>
<dbReference type="InterPro" id="IPR009081">
    <property type="entry name" value="PP-bd_ACP"/>
</dbReference>
<dbReference type="InterPro" id="IPR016039">
    <property type="entry name" value="Thiolase-like"/>
</dbReference>
<dbReference type="PANTHER" id="PTHR43775">
    <property type="entry name" value="FATTY ACID SYNTHASE"/>
    <property type="match status" value="1"/>
</dbReference>
<dbReference type="PANTHER" id="PTHR43775:SF22">
    <property type="entry name" value="SYNTHASE, PUTATIVE (JCVI)-RELATED"/>
    <property type="match status" value="1"/>
</dbReference>
<dbReference type="Pfam" id="PF00698">
    <property type="entry name" value="Acyl_transf_1"/>
    <property type="match status" value="1"/>
</dbReference>
<dbReference type="Pfam" id="PF16197">
    <property type="entry name" value="KAsynt_C_assoc"/>
    <property type="match status" value="1"/>
</dbReference>
<dbReference type="Pfam" id="PF00109">
    <property type="entry name" value="ketoacyl-synt"/>
    <property type="match status" value="1"/>
</dbReference>
<dbReference type="Pfam" id="PF02801">
    <property type="entry name" value="Ketoacyl-synt_C"/>
    <property type="match status" value="1"/>
</dbReference>
<dbReference type="Pfam" id="PF08659">
    <property type="entry name" value="KR"/>
    <property type="match status" value="1"/>
</dbReference>
<dbReference type="Pfam" id="PF21089">
    <property type="entry name" value="PKS_DH_N"/>
    <property type="match status" value="1"/>
</dbReference>
<dbReference type="Pfam" id="PF00550">
    <property type="entry name" value="PP-binding"/>
    <property type="match status" value="1"/>
</dbReference>
<dbReference type="SMART" id="SM00827">
    <property type="entry name" value="PKS_AT"/>
    <property type="match status" value="1"/>
</dbReference>
<dbReference type="SMART" id="SM00826">
    <property type="entry name" value="PKS_DH"/>
    <property type="match status" value="1"/>
</dbReference>
<dbReference type="SMART" id="SM00822">
    <property type="entry name" value="PKS_KR"/>
    <property type="match status" value="1"/>
</dbReference>
<dbReference type="SMART" id="SM00825">
    <property type="entry name" value="PKS_KS"/>
    <property type="match status" value="1"/>
</dbReference>
<dbReference type="SMART" id="SM00823">
    <property type="entry name" value="PKS_PP"/>
    <property type="match status" value="1"/>
</dbReference>
<dbReference type="SMART" id="SM01294">
    <property type="entry name" value="PKS_PP_betabranch"/>
    <property type="match status" value="1"/>
</dbReference>
<dbReference type="SUPFAM" id="SSF47336">
    <property type="entry name" value="ACP-like"/>
    <property type="match status" value="1"/>
</dbReference>
<dbReference type="SUPFAM" id="SSF52151">
    <property type="entry name" value="FabD/lysophospholipase-like"/>
    <property type="match status" value="1"/>
</dbReference>
<dbReference type="SUPFAM" id="SSF51735">
    <property type="entry name" value="NAD(P)-binding Rossmann-fold domains"/>
    <property type="match status" value="2"/>
</dbReference>
<dbReference type="SUPFAM" id="SSF55048">
    <property type="entry name" value="Probable ACP-binding domain of malonyl-CoA ACP transacylase"/>
    <property type="match status" value="1"/>
</dbReference>
<dbReference type="SUPFAM" id="SSF53901">
    <property type="entry name" value="Thiolase-like"/>
    <property type="match status" value="1"/>
</dbReference>
<dbReference type="PROSITE" id="PS50075">
    <property type="entry name" value="CARRIER"/>
    <property type="match status" value="1"/>
</dbReference>
<dbReference type="PROSITE" id="PS00606">
    <property type="entry name" value="KS3_1"/>
    <property type="match status" value="1"/>
</dbReference>
<dbReference type="PROSITE" id="PS52004">
    <property type="entry name" value="KS3_2"/>
    <property type="match status" value="1"/>
</dbReference>
<dbReference type="PROSITE" id="PS52019">
    <property type="entry name" value="PKS_MFAS_DH"/>
    <property type="match status" value="1"/>
</dbReference>
<gene>
    <name evidence="17" type="primary">atX</name>
    <name evidence="18" type="synonym">pksM</name>
    <name type="ORF">ATEG_06275</name>
</gene>
<comment type="function">
    <text evidence="8 9 10 12 13 14 15 16">6-methylsalicylic acid synthase; part of the gene cluster that mediates the biosynthesis of terreic acid, a quinone epoxide inhibitor of Bruton's tyrosine kinase (PubMed:17004275, PubMed:25265334). The first step of the pathway is the synthesis of 6-methylsalicylic acid (6-MSA) by the 6-methylsalicylic acid synthase atX (PubMed:17004275, PubMed:18412189, PubMed:20304931, PubMed:24534845, PubMed:25265334, PubMed:29391515, PubMed:9003280, PubMed:9438344). In the biosynthesis of 6-MSA, atX utilizes one acetyl-CoA and three malonyl-CoAs as its substrates and catalyzes a series of programmed reactions including Claisen condensation, reduction, aldol cyclization, and the hydrolytic cleavage that yields 6-MSA (PubMed:18412189, PubMed:20304931, PubMed:25265334, PubMed:9003280, PubMed:9438344). The 6-methylsalicylate 1-monooxygenase atA then catalyzes the decarboxylative hydroxylation of 6-MSA to 3-methylcatechol (PubMed:25265334, PubMed:29391515). The next step is the conversion of 3-methylcatechol to 3-methyl-1,2,4-benzenetriol by cytochrome P450 monooxygenase atE, which is enhanced by cytochrome P450 monooxygenase atG (PubMed:25265334, PubMed:29391515). Then, the epoxidase atD catalyzes the epoxidation and hydroxyl oxidation of 3-methyl-1,2,4-benzenetriol to terremutin (PubMed:29391515). Lastly, GMC oxidoreductase atC oxidizes terremutin to terreic acid (PubMed:25265334, PubMed:29391515).</text>
</comment>
<comment type="catalytic activity">
    <reaction evidence="8 9 10 15">
        <text>3 malonyl-CoA + acetyl-CoA + NADPH + 3 H(+) = 6-methylsalicylate + 3 CO2 + NADP(+) + 4 CoA + H2O</text>
        <dbReference type="Rhea" id="RHEA:12240"/>
        <dbReference type="ChEBI" id="CHEBI:15377"/>
        <dbReference type="ChEBI" id="CHEBI:15378"/>
        <dbReference type="ChEBI" id="CHEBI:16526"/>
        <dbReference type="ChEBI" id="CHEBI:36658"/>
        <dbReference type="ChEBI" id="CHEBI:57287"/>
        <dbReference type="ChEBI" id="CHEBI:57288"/>
        <dbReference type="ChEBI" id="CHEBI:57384"/>
        <dbReference type="ChEBI" id="CHEBI:57783"/>
        <dbReference type="ChEBI" id="CHEBI:58349"/>
        <dbReference type="EC" id="2.3.1.165"/>
    </reaction>
</comment>
<comment type="pathway">
    <text evidence="13 14">Secondary metabolite biosynthesis.</text>
</comment>
<comment type="subunit">
    <text evidence="8">Homotetramer.</text>
</comment>
<comment type="induction">
    <text evidence="16">Expression is observed in the middle of the vegetative growth phase.</text>
</comment>
<comment type="domain">
    <text evidence="10">The PKS/mFAS DH domain in this protein is not involved in the dehydration of the beta-hydroxy triketide intermediate tethered to the carrier domain as previously thought. Instead, the domain directly hydrolyzes a thioester bond of the tetraketide intermediate tethered to the carrier domain to release 6-MSA.</text>
</comment>
<comment type="disruption phenotype">
    <text evidence="13">Abolishes the production of terreic acid.</text>
</comment>
<comment type="biotechnology">
    <text evidence="7 11">Terreic acid is a metabolite with antibiotic properties (PubMed:23686727). Terreic acid also acts as a selective inhibitor of human Bruton's tyrosine kinase in mast cells and other immune cells (PubMed:10051623).</text>
</comment>
<accession>Q0CJ59</accession>
<sequence length="1803" mass="193794">MEVHGDEVLSVDSGVSTPPSTGSGFRRPLETPGTEIGNLNLNPQNEVAVVGMACRLAGGNNSPEELWQSILNRKDASGEIPSMRWEPYYRRDIRNPKILDQTTKRGYFLDHVENFDAAFFGVSPKEAEQMDPQQRLSLEVTWEALEDAGIPPQSLSGSETAVFMGVNSDDYSKLLLEDIPNVEAWMGIGTAYCGVPNRISYHLNLMGPSTAVDAACASSLVAIHHGRQAILQGESEVAIVGGVNALCGPGLTRVLDKAGATSTEGRCLSFDEDAKGYGRGEGAAVVILKRLSTAIRDGDHIRAIIKGSAVAQDGKTNGIMAPNAKAQELVAWNALRTAGVDPLTVGYVEAHATSTPLGDPTEVSAVSAVYGKGRPEGNPCFIGSVKPNVGHLEAGAGAVGFIKAVMAVEKAIFPPQTNLKRLNSRIDWGQAGVKVVQETLEWPGNEDDVRRAGVCSYGYGGTVSHAIIEEFAQQLQRPTTNTTDEDPLPRILLLSAPQERRLALQARTQASWIAAEGRNRTLESIATTLSTRRGHHDYRAAIIAENHDDAVQKLSDIVNGKAAEWTTSSRVLDASCSKDVVWVFSGHGAQWTAMATDLLKDIVFYQTISRLDPIVEREMGFSALHSLASGDFESSIKVQVLTYLVQVGLAAILRSKGLEPQAVIGHSVGEIAASVAAGCLTAEEGALIVTRRANLYRRVMGAGAMVLVNIPFVDMEKELQGRTDLVAAIDSSPSSCVVSGATEAVLALVEDLKSRGVNAFRVKTDIPFHHPMLDQLSEPLREAMAGSLSPRKPRVRLYSTSAEDPRSMVARDIYYWTSNMVNPVRLTAAVQAAVDDGLRLFLEVSSHPIVSHSVRETMLDLGVEDFTVTNTMARNKPADKTILSSIAQLHCRGAVVNWKKQLPGPWALDVPLTTWDHKPYWRHIHTGPISASTLHDVDKHTLLGQRVPVAGETTMVFTTQMDDQTKPFPGSHPLHGSEIVPAAALVNTFLHATGATTLSNITLRVPVAISQPRDIQVVVSQNQIKICSRLTQKAGSGADEGSWLTHTTGQWEAGGSKNAPAQLDIAAIKARLANNKLADNFSIDYLDKVGVSAMGFPWAVTEHYGTLQEMIARVDVAPDVPATSPLPWDAASWAPILDAATSVGSTLFFDQPRLRMPAHIHGVQVYTTQPPLKVGYLYVEKAGDRDLAVHVSVCDELGTVLARFESMRFSEIEGTPGSNGSEESLVHQLAWPPAIYSEKPLTINNVVLVSRDKNVADLYCGSLKDRVSSITVLDAAADLLSLSQDSSSVLQAKDTAVVYVPGPLHSADSIPTAAHSFLMELLLLVKIIVNGSLPTKVFVLTDRVCESESATALAQSPIHGVSRIIAAEHPDQWGGLIDVETPGQFPLETMKYVQEADNIRISDGIPRIARLRPLPRDKLLPPSKQTSLLPRPESTYLITGGLGALGLEVAQFLVEKGARRLILVSRRALPPRREWADILADASSSLAPALETIQALEAQGATVHTLAVDISSPDAAPQLAVAIDSLSLPPVRGVVHAAGVLDSQLVLSATSDSVERVLAPKITGALVLGTVFPPKALDFFMLFSSCGQLLGFPGQASYASGNAFLDAFATSRRHQGDNAVAVQWTSWRSLGMAASTDFINAELASKGITDITRDEGFRAWMHISKYDIDQAAVLRSLAFEADEPLPTPILTDIAVRKAGSASSADAPSAAPKETNEMPESIPERRTWLDERIRDCVARVLQLGSSDEVDSKAALSDLGVDSVMTVSLRGQLQKTLGVKVPPTLTWSCPTVSHLVGWFLEKMGN</sequence>
<protein>
    <recommendedName>
        <fullName evidence="17">6-methylsalicylic acid synthase</fullName>
        <shortName evidence="17">6-MSAS</shortName>
        <ecNumber evidence="8 9 10 15">2.3.1.165</ecNumber>
    </recommendedName>
    <alternativeName>
        <fullName evidence="19">Polyketide synthase atX</fullName>
    </alternativeName>
    <alternativeName>
        <fullName evidence="17">Terreic acid biosynthesis protein X</fullName>
    </alternativeName>
</protein>
<organism>
    <name type="scientific">Aspergillus terreus (strain NIH 2624 / FGSC A1156)</name>
    <dbReference type="NCBI Taxonomy" id="341663"/>
    <lineage>
        <taxon>Eukaryota</taxon>
        <taxon>Fungi</taxon>
        <taxon>Dikarya</taxon>
        <taxon>Ascomycota</taxon>
        <taxon>Pezizomycotina</taxon>
        <taxon>Eurotiomycetes</taxon>
        <taxon>Eurotiomycetidae</taxon>
        <taxon>Eurotiales</taxon>
        <taxon>Aspergillaceae</taxon>
        <taxon>Aspergillus</taxon>
        <taxon>Aspergillus subgen. Circumdati</taxon>
    </lineage>
</organism>
<keyword id="KW-0012">Acyltransferase</keyword>
<keyword id="KW-0903">Direct protein sequencing</keyword>
<keyword id="KW-0511">Multifunctional enzyme</keyword>
<keyword id="KW-0521">NADP</keyword>
<keyword id="KW-0560">Oxidoreductase</keyword>
<keyword id="KW-0596">Phosphopantetheine</keyword>
<keyword id="KW-0597">Phosphoprotein</keyword>
<keyword id="KW-1185">Reference proteome</keyword>
<keyword id="KW-0808">Transferase</keyword>
<proteinExistence type="evidence at protein level"/>